<feature type="chain" id="PRO_0000311462" description="Putative iron-sulfur cluster insertion protein ErpA">
    <location>
        <begin position="1"/>
        <end position="122"/>
    </location>
</feature>
<feature type="binding site" evidence="1">
    <location>
        <position position="50"/>
    </location>
    <ligand>
        <name>iron-sulfur cluster</name>
        <dbReference type="ChEBI" id="CHEBI:30408"/>
    </ligand>
</feature>
<feature type="binding site" evidence="1">
    <location>
        <position position="114"/>
    </location>
    <ligand>
        <name>iron-sulfur cluster</name>
        <dbReference type="ChEBI" id="CHEBI:30408"/>
    </ligand>
</feature>
<feature type="binding site" evidence="1">
    <location>
        <position position="116"/>
    </location>
    <ligand>
        <name>iron-sulfur cluster</name>
        <dbReference type="ChEBI" id="CHEBI:30408"/>
    </ligand>
</feature>
<organism>
    <name type="scientific">Burkholderia pseudomallei (strain 1106a)</name>
    <dbReference type="NCBI Taxonomy" id="357348"/>
    <lineage>
        <taxon>Bacteria</taxon>
        <taxon>Pseudomonadati</taxon>
        <taxon>Pseudomonadota</taxon>
        <taxon>Betaproteobacteria</taxon>
        <taxon>Burkholderiales</taxon>
        <taxon>Burkholderiaceae</taxon>
        <taxon>Burkholderia</taxon>
        <taxon>pseudomallei group</taxon>
    </lineage>
</organism>
<keyword id="KW-0408">Iron</keyword>
<keyword id="KW-0411">Iron-sulfur</keyword>
<keyword id="KW-0479">Metal-binding</keyword>
<evidence type="ECO:0000255" key="1">
    <source>
        <dbReference type="HAMAP-Rule" id="MF_01380"/>
    </source>
</evidence>
<reference key="1">
    <citation type="journal article" date="2010" name="Genome Biol. Evol.">
        <title>Continuing evolution of Burkholderia mallei through genome reduction and large-scale rearrangements.</title>
        <authorList>
            <person name="Losada L."/>
            <person name="Ronning C.M."/>
            <person name="DeShazer D."/>
            <person name="Woods D."/>
            <person name="Fedorova N."/>
            <person name="Kim H.S."/>
            <person name="Shabalina S.A."/>
            <person name="Pearson T.R."/>
            <person name="Brinkac L."/>
            <person name="Tan P."/>
            <person name="Nandi T."/>
            <person name="Crabtree J."/>
            <person name="Badger J."/>
            <person name="Beckstrom-Sternberg S."/>
            <person name="Saqib M."/>
            <person name="Schutzer S.E."/>
            <person name="Keim P."/>
            <person name="Nierman W.C."/>
        </authorList>
    </citation>
    <scope>NUCLEOTIDE SEQUENCE [LARGE SCALE GENOMIC DNA]</scope>
    <source>
        <strain>1106a</strain>
    </source>
</reference>
<proteinExistence type="inferred from homology"/>
<gene>
    <name evidence="1" type="primary">erpA</name>
    <name type="ordered locus">BURPS1106A_3412</name>
</gene>
<accession>A3NZ78</accession>
<sequence length="122" mass="13093">MNAVTESAATTEMPAPFVFTDAAADKVKQLIDEEGNPDLKLRVFVQGGGCSGFQYGFTFDEEVNEDDTVLNKNGVVLLVDAMSYQYLVGAEIDYKDDLNGAQFVIKNPNATTTCGCGSSFSV</sequence>
<protein>
    <recommendedName>
        <fullName evidence="1">Putative iron-sulfur cluster insertion protein ErpA</fullName>
    </recommendedName>
</protein>
<dbReference type="EMBL" id="CP000572">
    <property type="protein sequence ID" value="ABN89280.1"/>
    <property type="molecule type" value="Genomic_DNA"/>
</dbReference>
<dbReference type="RefSeq" id="WP_004194247.1">
    <property type="nucleotide sequence ID" value="NC_009076.1"/>
</dbReference>
<dbReference type="SMR" id="A3NZ78"/>
<dbReference type="GeneID" id="93061505"/>
<dbReference type="KEGG" id="bpl:BURPS1106A_3412"/>
<dbReference type="HOGENOM" id="CLU_069054_5_3_4"/>
<dbReference type="Proteomes" id="UP000006738">
    <property type="component" value="Chromosome I"/>
</dbReference>
<dbReference type="GO" id="GO:0051537">
    <property type="term" value="F:2 iron, 2 sulfur cluster binding"/>
    <property type="evidence" value="ECO:0007669"/>
    <property type="project" value="UniProtKB-ARBA"/>
</dbReference>
<dbReference type="GO" id="GO:0051539">
    <property type="term" value="F:4 iron, 4 sulfur cluster binding"/>
    <property type="evidence" value="ECO:0007669"/>
    <property type="project" value="TreeGrafter"/>
</dbReference>
<dbReference type="GO" id="GO:0005506">
    <property type="term" value="F:iron ion binding"/>
    <property type="evidence" value="ECO:0007669"/>
    <property type="project" value="UniProtKB-UniRule"/>
</dbReference>
<dbReference type="GO" id="GO:0016226">
    <property type="term" value="P:iron-sulfur cluster assembly"/>
    <property type="evidence" value="ECO:0007669"/>
    <property type="project" value="UniProtKB-UniRule"/>
</dbReference>
<dbReference type="FunFam" id="2.60.300.12:FF:000002">
    <property type="entry name" value="Iron-sulfur cluster insertion protein ErpA"/>
    <property type="match status" value="1"/>
</dbReference>
<dbReference type="Gene3D" id="2.60.300.12">
    <property type="entry name" value="HesB-like domain"/>
    <property type="match status" value="1"/>
</dbReference>
<dbReference type="HAMAP" id="MF_01380">
    <property type="entry name" value="Fe_S_insert_ErpA"/>
    <property type="match status" value="1"/>
</dbReference>
<dbReference type="InterPro" id="IPR000361">
    <property type="entry name" value="FeS_biogenesis"/>
</dbReference>
<dbReference type="InterPro" id="IPR016092">
    <property type="entry name" value="FeS_cluster_insertion"/>
</dbReference>
<dbReference type="InterPro" id="IPR017870">
    <property type="entry name" value="FeS_cluster_insertion_CS"/>
</dbReference>
<dbReference type="InterPro" id="IPR023063">
    <property type="entry name" value="FeS_cluster_insertion_RrpA"/>
</dbReference>
<dbReference type="InterPro" id="IPR035903">
    <property type="entry name" value="HesB-like_dom_sf"/>
</dbReference>
<dbReference type="NCBIfam" id="TIGR00049">
    <property type="entry name" value="iron-sulfur cluster assembly accessory protein"/>
    <property type="match status" value="1"/>
</dbReference>
<dbReference type="NCBIfam" id="NF010147">
    <property type="entry name" value="PRK13623.1"/>
    <property type="match status" value="1"/>
</dbReference>
<dbReference type="PANTHER" id="PTHR43011">
    <property type="entry name" value="IRON-SULFUR CLUSTER ASSEMBLY 2 HOMOLOG, MITOCHONDRIAL"/>
    <property type="match status" value="1"/>
</dbReference>
<dbReference type="PANTHER" id="PTHR43011:SF1">
    <property type="entry name" value="IRON-SULFUR CLUSTER ASSEMBLY 2 HOMOLOG, MITOCHONDRIAL"/>
    <property type="match status" value="1"/>
</dbReference>
<dbReference type="Pfam" id="PF01521">
    <property type="entry name" value="Fe-S_biosyn"/>
    <property type="match status" value="1"/>
</dbReference>
<dbReference type="SUPFAM" id="SSF89360">
    <property type="entry name" value="HesB-like domain"/>
    <property type="match status" value="1"/>
</dbReference>
<dbReference type="PROSITE" id="PS01152">
    <property type="entry name" value="HESB"/>
    <property type="match status" value="1"/>
</dbReference>
<name>ERPA_BURP0</name>
<comment type="function">
    <text evidence="1">Required for insertion of 4Fe-4S clusters.</text>
</comment>
<comment type="cofactor">
    <cofactor evidence="1">
        <name>iron-sulfur cluster</name>
        <dbReference type="ChEBI" id="CHEBI:30408"/>
    </cofactor>
    <text evidence="1">Binds 1 iron-sulfur cluster per subunit.</text>
</comment>
<comment type="subunit">
    <text evidence="1">Homodimer.</text>
</comment>
<comment type="similarity">
    <text evidence="1">Belongs to the HesB/IscA family.</text>
</comment>